<gene>
    <name type="primary">Rho</name>
</gene>
<comment type="function">
    <text evidence="8 12">Photoreceptor required for image-forming vision at low light intensity. Required for photoreceptor cell viability after birth (PubMed:9020854). Light-induced isomerization of 11-cis to all-trans retinal triggers a conformational change that activates signaling via G-proteins. Subsequent receptor phosphorylation mediates displacement of the bound G-protein alpha subunit by the arrestin SAG and terminates signaling (PubMed:27353443).</text>
</comment>
<comment type="subunit">
    <text evidence="1 3 9">Homodimer (By similarity). May form a complex composed of RHO, GRK1 and RCVRN in a Ca(2+)-dependent manner; RCVRN prevents the interaction between GRK1 and RHO (By similarity). Interacts with GRK1 (By similarity). Interacts (phosphorylated form) with SAG (By similarity). Interacts with GNAT1 (By similarity). Interacts with GNAT3. SAG and G-proteins compete for a common binding site (By similarity). Interacts with PRCD; the interaction promotes PRCD stability (PubMed:27509380). Forms a complex with ASAP1 and ARF4. Forms a complex with ASAP1, RAB11A, Rabin8/RAB3IP, ARF4 and RAB11FIP3; the complex regulates Golgi-to-cilia rhodopsin/RHO transport in photoreceptors (By similarity).</text>
</comment>
<comment type="subcellular location">
    <subcellularLocation>
        <location evidence="1">Membrane</location>
        <topology evidence="1">Multi-pass membrane protein</topology>
    </subcellularLocation>
    <subcellularLocation>
        <location evidence="7 8 10">Cell projection</location>
        <location evidence="7 8 10">Cilium</location>
        <location evidence="7 8 10">Photoreceptor outer segment</location>
    </subcellularLocation>
    <text evidence="3">Synthesized in the inner segment (IS) of rod photoreceptor cells before vectorial transport to disk membranes in the rod outer segment (OS) photosensory cilia.</text>
</comment>
<comment type="tissue specificity">
    <text evidence="7 8">Rod-shaped photoreceptor cells in the retina (at protein level).</text>
</comment>
<comment type="developmental stage">
    <text evidence="10">Expressed in the outer segment of retinal photoreceptors at postnatal days 11 and 22.</text>
</comment>
<comment type="PTM">
    <text evidence="6">Phosphorylated on some or all of the serine and threonine residues present in the C-terminal region.</text>
</comment>
<comment type="PTM">
    <text evidence="1">Contains one covalently linked retinal chromophore. Upon light absorption, the covalently bound 11-cis-retinal is converted to all-trans-retinal. After hydrolysis of the Schiff base and release of the covalently bound all-trans-retinal, active rhodopsin is regenerated by binding of a fresh molecule of 11-cis-retinal.</text>
</comment>
<comment type="disruption phenotype">
    <text evidence="11 12">Mice show no response in electroretinograms at low light intensity (PubMed:9020854). They fail to form rod outer segments leading to degeneration of photoreceptor cells within 3 months of birth (PubMed:32312889, PubMed:9020854).</text>
</comment>
<comment type="similarity">
    <text evidence="5">Belongs to the G-protein coupled receptor 1 family. Opsin subfamily.</text>
</comment>
<sequence>MNGTEGPNFYVPFSNVTGVVRSPFEQPQYYLAEPWQFSMLAAYMFLLIVLGFPINFLTLYVTVQHKKLRTPLNYILLNLAVADLFMVFGGFTTTLYTSLHGYFVFGPTGCNLEGFFATLGGEIALWSLVVLAIERYVVVCKPMSNFRFGENHAIMGVVFTWIMALACAAPPLVGWSRYIPEGMQCSCGIDYYTLKPEVNNESFVIYMFVVHFTIPMIVIFFCYGQLVFTVKEAAAQQQESATTQKAEKEVTRMVIIMVIFFLICWLPYASVAFYIFTHQGSNFGPIFMTLPAFFAKSSSIYNPVIYIMLNKQFRNCMLTTLCCGKNPLGDDDASATASKTETSQVAPA</sequence>
<proteinExistence type="evidence at protein level"/>
<evidence type="ECO:0000250" key="1">
    <source>
        <dbReference type="UniProtKB" id="P02699"/>
    </source>
</evidence>
<evidence type="ECO:0000250" key="2">
    <source>
        <dbReference type="UniProtKB" id="P02700"/>
    </source>
</evidence>
<evidence type="ECO:0000250" key="3">
    <source>
        <dbReference type="UniProtKB" id="P08100"/>
    </source>
</evidence>
<evidence type="ECO:0000255" key="4"/>
<evidence type="ECO:0000255" key="5">
    <source>
        <dbReference type="PROSITE-ProRule" id="PRU00521"/>
    </source>
</evidence>
<evidence type="ECO:0000269" key="6">
    <source>
    </source>
</evidence>
<evidence type="ECO:0000269" key="7">
    <source>
    </source>
</evidence>
<evidence type="ECO:0000269" key="8">
    <source>
    </source>
</evidence>
<evidence type="ECO:0000269" key="9">
    <source>
    </source>
</evidence>
<evidence type="ECO:0000269" key="10">
    <source>
    </source>
</evidence>
<evidence type="ECO:0000269" key="11">
    <source>
    </source>
</evidence>
<evidence type="ECO:0000269" key="12">
    <source>
    </source>
</evidence>
<evidence type="ECO:0000305" key="13"/>
<dbReference type="EMBL" id="M36699">
    <property type="protein sequence ID" value="AAA39861.1"/>
    <property type="molecule type" value="Genomic_DNA"/>
</dbReference>
<dbReference type="EMBL" id="M36695">
    <property type="protein sequence ID" value="AAA39861.1"/>
    <property type="status" value="JOINED"/>
    <property type="molecule type" value="Genomic_DNA"/>
</dbReference>
<dbReference type="EMBL" id="M36696">
    <property type="protein sequence ID" value="AAA39861.1"/>
    <property type="status" value="JOINED"/>
    <property type="molecule type" value="Genomic_DNA"/>
</dbReference>
<dbReference type="EMBL" id="M36697">
    <property type="protein sequence ID" value="AAA39861.1"/>
    <property type="status" value="JOINED"/>
    <property type="molecule type" value="Genomic_DNA"/>
</dbReference>
<dbReference type="EMBL" id="M36698">
    <property type="protein sequence ID" value="AAA39861.1"/>
    <property type="status" value="JOINED"/>
    <property type="molecule type" value="Genomic_DNA"/>
</dbReference>
<dbReference type="EMBL" id="M55171">
    <property type="protein sequence ID" value="AAA63392.1"/>
    <property type="molecule type" value="Genomic_DNA"/>
</dbReference>
<dbReference type="EMBL" id="AK044333">
    <property type="protein sequence ID" value="BAC31871.1"/>
    <property type="molecule type" value="mRNA"/>
</dbReference>
<dbReference type="EMBL" id="AK044412">
    <property type="protein sequence ID" value="BAC31908.1"/>
    <property type="molecule type" value="mRNA"/>
</dbReference>
<dbReference type="EMBL" id="CH466523">
    <property type="protein sequence ID" value="EDK99545.1"/>
    <property type="molecule type" value="Genomic_DNA"/>
</dbReference>
<dbReference type="EMBL" id="BC013125">
    <property type="protein sequence ID" value="AAH13125.1"/>
    <property type="molecule type" value="mRNA"/>
</dbReference>
<dbReference type="EMBL" id="BC031766">
    <property type="protein sequence ID" value="AAH31766.1"/>
    <property type="molecule type" value="mRNA"/>
</dbReference>
<dbReference type="CCDS" id="CCDS20446.1"/>
<dbReference type="PIR" id="A23665">
    <property type="entry name" value="A23665"/>
</dbReference>
<dbReference type="RefSeq" id="NP_663358.1">
    <property type="nucleotide sequence ID" value="NM_145383.2"/>
</dbReference>
<dbReference type="SMR" id="P15409"/>
<dbReference type="BioGRID" id="229339">
    <property type="interactions" value="1"/>
</dbReference>
<dbReference type="FunCoup" id="P15409">
    <property type="interactions" value="131"/>
</dbReference>
<dbReference type="IntAct" id="P15409">
    <property type="interactions" value="3"/>
</dbReference>
<dbReference type="MINT" id="P15409"/>
<dbReference type="STRING" id="10090.ENSMUSP00000032471"/>
<dbReference type="GlyCosmos" id="P15409">
    <property type="glycosylation" value="2 sites, No reported glycans"/>
</dbReference>
<dbReference type="GlyGen" id="P15409">
    <property type="glycosylation" value="3 sites, 1 N-linked glycan (1 site)"/>
</dbReference>
<dbReference type="iPTMnet" id="P15409"/>
<dbReference type="PhosphoSitePlus" id="P15409"/>
<dbReference type="SwissPalm" id="P15409"/>
<dbReference type="PaxDb" id="10090-ENSMUSP00000032471"/>
<dbReference type="ProteomicsDB" id="293847"/>
<dbReference type="Antibodypedia" id="17456">
    <property type="antibodies" value="508 antibodies from 38 providers"/>
</dbReference>
<dbReference type="DNASU" id="212541"/>
<dbReference type="Ensembl" id="ENSMUST00000032471.9">
    <property type="protein sequence ID" value="ENSMUSP00000032471.7"/>
    <property type="gene ID" value="ENSMUSG00000030324.9"/>
</dbReference>
<dbReference type="GeneID" id="212541"/>
<dbReference type="KEGG" id="mmu:212541"/>
<dbReference type="UCSC" id="uc009djk.1">
    <property type="organism name" value="mouse"/>
</dbReference>
<dbReference type="AGR" id="MGI:97914"/>
<dbReference type="CTD" id="6010"/>
<dbReference type="MGI" id="MGI:97914">
    <property type="gene designation" value="Rho"/>
</dbReference>
<dbReference type="VEuPathDB" id="HostDB:ENSMUSG00000030324"/>
<dbReference type="eggNOG" id="KOG3656">
    <property type="taxonomic scope" value="Eukaryota"/>
</dbReference>
<dbReference type="GeneTree" id="ENSGT01030000234549"/>
<dbReference type="HOGENOM" id="CLU_009579_3_0_1"/>
<dbReference type="InParanoid" id="P15409"/>
<dbReference type="OMA" id="EFGPLFM"/>
<dbReference type="OrthoDB" id="5962323at2759"/>
<dbReference type="PhylomeDB" id="P15409"/>
<dbReference type="TreeFam" id="TF324998"/>
<dbReference type="Reactome" id="R-MMU-2453902">
    <property type="pathway name" value="The canonical retinoid cycle in rods (twilight vision)"/>
</dbReference>
<dbReference type="Reactome" id="R-MMU-2485179">
    <property type="pathway name" value="Activation of the phototransduction cascade"/>
</dbReference>
<dbReference type="Reactome" id="R-MMU-2514859">
    <property type="pathway name" value="Inactivation, recovery and regulation of the phototransduction cascade"/>
</dbReference>
<dbReference type="Reactome" id="R-MMU-418594">
    <property type="pathway name" value="G alpha (i) signalling events"/>
</dbReference>
<dbReference type="Reactome" id="R-MMU-419771">
    <property type="pathway name" value="Opsins"/>
</dbReference>
<dbReference type="Reactome" id="R-MMU-5620916">
    <property type="pathway name" value="VxPx cargo-targeting to cilium"/>
</dbReference>
<dbReference type="BioGRID-ORCS" id="212541">
    <property type="hits" value="3 hits in 76 CRISPR screens"/>
</dbReference>
<dbReference type="ChiTaRS" id="Rho">
    <property type="organism name" value="mouse"/>
</dbReference>
<dbReference type="PRO" id="PR:P15409"/>
<dbReference type="Proteomes" id="UP000000589">
    <property type="component" value="Chromosome 6"/>
</dbReference>
<dbReference type="RNAct" id="P15409">
    <property type="molecule type" value="protein"/>
</dbReference>
<dbReference type="Bgee" id="ENSMUSG00000030324">
    <property type="expression patterns" value="Expressed in retinal neural layer and 56 other cell types or tissues"/>
</dbReference>
<dbReference type="ExpressionAtlas" id="P15409">
    <property type="expression patterns" value="baseline and differential"/>
</dbReference>
<dbReference type="GO" id="GO:0005911">
    <property type="term" value="C:cell-cell junction"/>
    <property type="evidence" value="ECO:0000314"/>
    <property type="project" value="MGI"/>
</dbReference>
<dbReference type="GO" id="GO:0005794">
    <property type="term" value="C:Golgi apparatus"/>
    <property type="evidence" value="ECO:0000266"/>
    <property type="project" value="MGI"/>
</dbReference>
<dbReference type="GO" id="GO:0016020">
    <property type="term" value="C:membrane"/>
    <property type="evidence" value="ECO:0000250"/>
    <property type="project" value="UniProtKB"/>
</dbReference>
<dbReference type="GO" id="GO:0097381">
    <property type="term" value="C:photoreceptor disc membrane"/>
    <property type="evidence" value="ECO:0000250"/>
    <property type="project" value="UniProtKB"/>
</dbReference>
<dbReference type="GO" id="GO:0001917">
    <property type="term" value="C:photoreceptor inner segment"/>
    <property type="evidence" value="ECO:0000314"/>
    <property type="project" value="UniProtKB"/>
</dbReference>
<dbReference type="GO" id="GO:0060342">
    <property type="term" value="C:photoreceptor inner segment membrane"/>
    <property type="evidence" value="ECO:0000250"/>
    <property type="project" value="UniProtKB"/>
</dbReference>
<dbReference type="GO" id="GO:0001750">
    <property type="term" value="C:photoreceptor outer segment"/>
    <property type="evidence" value="ECO:0000314"/>
    <property type="project" value="MGI"/>
</dbReference>
<dbReference type="GO" id="GO:0042622">
    <property type="term" value="C:photoreceptor outer segment membrane"/>
    <property type="evidence" value="ECO:0000250"/>
    <property type="project" value="UniProtKB"/>
</dbReference>
<dbReference type="GO" id="GO:0005886">
    <property type="term" value="C:plasma membrane"/>
    <property type="evidence" value="ECO:0000250"/>
    <property type="project" value="UniProtKB"/>
</dbReference>
<dbReference type="GO" id="GO:0120200">
    <property type="term" value="C:rod photoreceptor outer segment"/>
    <property type="evidence" value="ECO:0000314"/>
    <property type="project" value="MGI"/>
</dbReference>
<dbReference type="GO" id="GO:1990913">
    <property type="term" value="C:sperm head plasma membrane"/>
    <property type="evidence" value="ECO:0000314"/>
    <property type="project" value="MGI"/>
</dbReference>
<dbReference type="GO" id="GO:0097225">
    <property type="term" value="C:sperm midpiece"/>
    <property type="evidence" value="ECO:0000314"/>
    <property type="project" value="MGI"/>
</dbReference>
<dbReference type="GO" id="GO:0005502">
    <property type="term" value="F:11-cis retinal binding"/>
    <property type="evidence" value="ECO:0000250"/>
    <property type="project" value="UniProtKB"/>
</dbReference>
<dbReference type="GO" id="GO:0008020">
    <property type="term" value="F:G protein-coupled photoreceptor activity"/>
    <property type="evidence" value="ECO:0000250"/>
    <property type="project" value="UniProtKB"/>
</dbReference>
<dbReference type="GO" id="GO:0046872">
    <property type="term" value="F:metal ion binding"/>
    <property type="evidence" value="ECO:0007669"/>
    <property type="project" value="UniProtKB-KW"/>
</dbReference>
<dbReference type="GO" id="GO:0030507">
    <property type="term" value="F:spectrin binding"/>
    <property type="evidence" value="ECO:0000266"/>
    <property type="project" value="MGI"/>
</dbReference>
<dbReference type="GO" id="GO:0016038">
    <property type="term" value="P:absorption of visible light"/>
    <property type="evidence" value="ECO:0000250"/>
    <property type="project" value="AgBase"/>
</dbReference>
<dbReference type="GO" id="GO:0071482">
    <property type="term" value="P:cellular response to light stimulus"/>
    <property type="evidence" value="ECO:0000315"/>
    <property type="project" value="MGI"/>
</dbReference>
<dbReference type="GO" id="GO:0009583">
    <property type="term" value="P:detection of light stimulus"/>
    <property type="evidence" value="ECO:0000315"/>
    <property type="project" value="MGI"/>
</dbReference>
<dbReference type="GO" id="GO:0050960">
    <property type="term" value="P:detection of temperature stimulus involved in thermoception"/>
    <property type="evidence" value="ECO:0000316"/>
    <property type="project" value="MGI"/>
</dbReference>
<dbReference type="GO" id="GO:0016056">
    <property type="term" value="P:G protein-coupled opsin signaling pathway"/>
    <property type="evidence" value="ECO:0000250"/>
    <property type="project" value="UniProtKB"/>
</dbReference>
<dbReference type="GO" id="GO:0010467">
    <property type="term" value="P:gene expression"/>
    <property type="evidence" value="ECO:0000315"/>
    <property type="project" value="MGI"/>
</dbReference>
<dbReference type="GO" id="GO:0000226">
    <property type="term" value="P:microtubule cytoskeleton organization"/>
    <property type="evidence" value="ECO:0000315"/>
    <property type="project" value="MGI"/>
</dbReference>
<dbReference type="GO" id="GO:0045494">
    <property type="term" value="P:photoreceptor cell maintenance"/>
    <property type="evidence" value="ECO:0000315"/>
    <property type="project" value="UniProtKB"/>
</dbReference>
<dbReference type="GO" id="GO:0007602">
    <property type="term" value="P:phototransduction"/>
    <property type="evidence" value="ECO:0000315"/>
    <property type="project" value="MGI"/>
</dbReference>
<dbReference type="GO" id="GO:0071800">
    <property type="term" value="P:podosome assembly"/>
    <property type="evidence" value="ECO:0000315"/>
    <property type="project" value="MGI"/>
</dbReference>
<dbReference type="GO" id="GO:0009642">
    <property type="term" value="P:response to light intensity"/>
    <property type="evidence" value="ECO:0000315"/>
    <property type="project" value="MGI"/>
</dbReference>
<dbReference type="GO" id="GO:0009416">
    <property type="term" value="P:response to light stimulus"/>
    <property type="evidence" value="ECO:0000315"/>
    <property type="project" value="MGI"/>
</dbReference>
<dbReference type="GO" id="GO:0060041">
    <property type="term" value="P:retina development in camera-type eye"/>
    <property type="evidence" value="ECO:0000315"/>
    <property type="project" value="MGI"/>
</dbReference>
<dbReference type="GO" id="GO:1904389">
    <property type="term" value="P:rod bipolar cell differentiation"/>
    <property type="evidence" value="ECO:0000315"/>
    <property type="project" value="MGI"/>
</dbReference>
<dbReference type="GO" id="GO:0050953">
    <property type="term" value="P:sensory perception of light stimulus"/>
    <property type="evidence" value="ECO:0000315"/>
    <property type="project" value="MGI"/>
</dbReference>
<dbReference type="GO" id="GO:0043052">
    <property type="term" value="P:thermotaxis"/>
    <property type="evidence" value="ECO:0000316"/>
    <property type="project" value="MGI"/>
</dbReference>
<dbReference type="GO" id="GO:0007601">
    <property type="term" value="P:visual perception"/>
    <property type="evidence" value="ECO:0000315"/>
    <property type="project" value="MGI"/>
</dbReference>
<dbReference type="CDD" id="cd15080">
    <property type="entry name" value="7tmA_MWS_opsin"/>
    <property type="match status" value="1"/>
</dbReference>
<dbReference type="FunFam" id="1.20.1070.10:FF:000018">
    <property type="entry name" value="Rhodopsin"/>
    <property type="match status" value="1"/>
</dbReference>
<dbReference type="Gene3D" id="1.20.1070.10">
    <property type="entry name" value="Rhodopsin 7-helix transmembrane proteins"/>
    <property type="match status" value="1"/>
</dbReference>
<dbReference type="InterPro" id="IPR050125">
    <property type="entry name" value="GPCR_opsins"/>
</dbReference>
<dbReference type="InterPro" id="IPR000276">
    <property type="entry name" value="GPCR_Rhodpsn"/>
</dbReference>
<dbReference type="InterPro" id="IPR017452">
    <property type="entry name" value="GPCR_Rhodpsn_7TM"/>
</dbReference>
<dbReference type="InterPro" id="IPR001760">
    <property type="entry name" value="Opsin"/>
</dbReference>
<dbReference type="InterPro" id="IPR027430">
    <property type="entry name" value="Retinal_BS"/>
</dbReference>
<dbReference type="InterPro" id="IPR000732">
    <property type="entry name" value="Rhodopsin"/>
</dbReference>
<dbReference type="InterPro" id="IPR019477">
    <property type="entry name" value="Rhodopsin_N"/>
</dbReference>
<dbReference type="PANTHER" id="PTHR24240">
    <property type="entry name" value="OPSIN"/>
    <property type="match status" value="1"/>
</dbReference>
<dbReference type="Pfam" id="PF00001">
    <property type="entry name" value="7tm_1"/>
    <property type="match status" value="1"/>
</dbReference>
<dbReference type="Pfam" id="PF10413">
    <property type="entry name" value="Rhodopsin_N"/>
    <property type="match status" value="1"/>
</dbReference>
<dbReference type="PRINTS" id="PR00237">
    <property type="entry name" value="GPCRRHODOPSN"/>
</dbReference>
<dbReference type="PRINTS" id="PR00238">
    <property type="entry name" value="OPSIN"/>
</dbReference>
<dbReference type="PRINTS" id="PR00579">
    <property type="entry name" value="RHODOPSIN"/>
</dbReference>
<dbReference type="SMART" id="SM01381">
    <property type="entry name" value="7TM_GPCR_Srsx"/>
    <property type="match status" value="1"/>
</dbReference>
<dbReference type="SUPFAM" id="SSF81321">
    <property type="entry name" value="Family A G protein-coupled receptor-like"/>
    <property type="match status" value="1"/>
</dbReference>
<dbReference type="PROSITE" id="PS00237">
    <property type="entry name" value="G_PROTEIN_RECEP_F1_1"/>
    <property type="match status" value="1"/>
</dbReference>
<dbReference type="PROSITE" id="PS50262">
    <property type="entry name" value="G_PROTEIN_RECEP_F1_2"/>
    <property type="match status" value="1"/>
</dbReference>
<dbReference type="PROSITE" id="PS00238">
    <property type="entry name" value="OPSIN"/>
    <property type="match status" value="1"/>
</dbReference>
<feature type="chain" id="PRO_0000197687" description="Rhodopsin">
    <location>
        <begin position="1"/>
        <end position="348"/>
    </location>
</feature>
<feature type="topological domain" description="Extracellular" evidence="13">
    <location>
        <begin position="1"/>
        <end position="36"/>
    </location>
</feature>
<feature type="transmembrane region" description="Helical; Name=1" evidence="1">
    <location>
        <begin position="37"/>
        <end position="61"/>
    </location>
</feature>
<feature type="topological domain" description="Cytoplasmic" evidence="13">
    <location>
        <begin position="62"/>
        <end position="73"/>
    </location>
</feature>
<feature type="transmembrane region" description="Helical; Name=2" evidence="1">
    <location>
        <begin position="74"/>
        <end position="96"/>
    </location>
</feature>
<feature type="topological domain" description="Extracellular" evidence="13">
    <location>
        <begin position="97"/>
        <end position="110"/>
    </location>
</feature>
<feature type="transmembrane region" description="Helical; Name=3" evidence="1">
    <location>
        <begin position="111"/>
        <end position="133"/>
    </location>
</feature>
<feature type="topological domain" description="Cytoplasmic" evidence="13">
    <location>
        <begin position="134"/>
        <end position="152"/>
    </location>
</feature>
<feature type="transmembrane region" description="Helical; Name=4" evidence="1">
    <location>
        <begin position="153"/>
        <end position="173"/>
    </location>
</feature>
<feature type="topological domain" description="Extracellular" evidence="13">
    <location>
        <begin position="174"/>
        <end position="202"/>
    </location>
</feature>
<feature type="transmembrane region" description="Helical; Name=5" evidence="1">
    <location>
        <begin position="203"/>
        <end position="224"/>
    </location>
</feature>
<feature type="topological domain" description="Cytoplasmic" evidence="13">
    <location>
        <begin position="225"/>
        <end position="252"/>
    </location>
</feature>
<feature type="transmembrane region" description="Helical; Name=6" evidence="1">
    <location>
        <begin position="253"/>
        <end position="274"/>
    </location>
</feature>
<feature type="topological domain" description="Extracellular" evidence="13">
    <location>
        <begin position="275"/>
        <end position="286"/>
    </location>
</feature>
<feature type="transmembrane region" description="Helical; Name=7" evidence="1">
    <location>
        <begin position="287"/>
        <end position="308"/>
    </location>
</feature>
<feature type="topological domain" description="Cytoplasmic" evidence="13">
    <location>
        <begin position="309"/>
        <end position="348"/>
    </location>
</feature>
<feature type="region of interest" description="Interaction with SAG" evidence="1">
    <location>
        <begin position="330"/>
        <end position="348"/>
    </location>
</feature>
<feature type="short sequence motif" description="'Ionic lock' involved in activated form stabilization" evidence="1">
    <location>
        <begin position="134"/>
        <end position="136"/>
    </location>
</feature>
<feature type="binding site" evidence="1">
    <location>
        <position position="201"/>
    </location>
    <ligand>
        <name>Zn(2+)</name>
        <dbReference type="ChEBI" id="CHEBI:29105"/>
    </ligand>
</feature>
<feature type="binding site" evidence="1">
    <location>
        <position position="279"/>
    </location>
    <ligand>
        <name>Zn(2+)</name>
        <dbReference type="ChEBI" id="CHEBI:29105"/>
    </ligand>
</feature>
<feature type="site" description="Plays an important role in the conformation switch to the active conformation" evidence="1">
    <location>
        <position position="113"/>
    </location>
</feature>
<feature type="modified residue" description="N-acetylmethionine" evidence="1">
    <location>
        <position position="1"/>
    </location>
</feature>
<feature type="modified residue" description="N6-(retinylidene)lysine" evidence="1">
    <location>
        <position position="296"/>
    </location>
</feature>
<feature type="modified residue" description="Phosphoserine" evidence="6">
    <location>
        <position position="334"/>
    </location>
</feature>
<feature type="modified residue" description="Phosphothreonine" evidence="2">
    <location>
        <position position="336"/>
    </location>
</feature>
<feature type="modified residue" description="Phosphoserine" evidence="6">
    <location>
        <position position="338"/>
    </location>
</feature>
<feature type="modified residue" description="Phosphothreonine" evidence="1">
    <location>
        <position position="340"/>
    </location>
</feature>
<feature type="modified residue" description="Phosphothreonine" evidence="1">
    <location>
        <position position="342"/>
    </location>
</feature>
<feature type="modified residue" description="Phosphoserine" evidence="6">
    <location>
        <position position="343"/>
    </location>
</feature>
<feature type="lipid moiety-binding region" description="S-palmitoyl cysteine" evidence="1">
    <location>
        <position position="322"/>
    </location>
</feature>
<feature type="lipid moiety-binding region" description="S-palmitoyl cysteine" evidence="1">
    <location>
        <position position="323"/>
    </location>
</feature>
<feature type="glycosylation site" description="N-linked (GlcNAc...) asparagine" evidence="4">
    <location>
        <position position="2"/>
    </location>
</feature>
<feature type="glycosylation site" description="N-linked (GlcNAc...) asparagine" evidence="4">
    <location>
        <position position="15"/>
    </location>
</feature>
<feature type="disulfide bond" evidence="5">
    <location>
        <begin position="110"/>
        <end position="187"/>
    </location>
</feature>
<feature type="sequence conflict" description="In Ref. 1; AAA39861 and 2; AAA63392." evidence="13" ref="1 2">
    <original>V</original>
    <variation>G</variation>
    <location>
        <position position="20"/>
    </location>
</feature>
<name>OPSD_MOUSE</name>
<protein>
    <recommendedName>
        <fullName>Rhodopsin</fullName>
    </recommendedName>
</protein>
<accession>P15409</accession>
<accession>Q8K0D8</accession>
<accession>Q96DZ2</accession>
<keyword id="KW-0007">Acetylation</keyword>
<keyword id="KW-0966">Cell projection</keyword>
<keyword id="KW-0157">Chromophore</keyword>
<keyword id="KW-1015">Disulfide bond</keyword>
<keyword id="KW-0297">G-protein coupled receptor</keyword>
<keyword id="KW-0325">Glycoprotein</keyword>
<keyword id="KW-0449">Lipoprotein</keyword>
<keyword id="KW-0472">Membrane</keyword>
<keyword id="KW-0479">Metal-binding</keyword>
<keyword id="KW-0564">Palmitate</keyword>
<keyword id="KW-0597">Phosphoprotein</keyword>
<keyword id="KW-0600">Photoreceptor protein</keyword>
<keyword id="KW-0675">Receptor</keyword>
<keyword id="KW-1185">Reference proteome</keyword>
<keyword id="KW-0681">Retinal protein</keyword>
<keyword id="KW-0716">Sensory transduction</keyword>
<keyword id="KW-0807">Transducer</keyword>
<keyword id="KW-0812">Transmembrane</keyword>
<keyword id="KW-1133">Transmembrane helix</keyword>
<keyword id="KW-0844">Vision</keyword>
<keyword id="KW-0862">Zinc</keyword>
<organism>
    <name type="scientific">Mus musculus</name>
    <name type="common">Mouse</name>
    <dbReference type="NCBI Taxonomy" id="10090"/>
    <lineage>
        <taxon>Eukaryota</taxon>
        <taxon>Metazoa</taxon>
        <taxon>Chordata</taxon>
        <taxon>Craniata</taxon>
        <taxon>Vertebrata</taxon>
        <taxon>Euteleostomi</taxon>
        <taxon>Mammalia</taxon>
        <taxon>Eutheria</taxon>
        <taxon>Euarchontoglires</taxon>
        <taxon>Glires</taxon>
        <taxon>Rodentia</taxon>
        <taxon>Myomorpha</taxon>
        <taxon>Muroidea</taxon>
        <taxon>Muridae</taxon>
        <taxon>Murinae</taxon>
        <taxon>Mus</taxon>
        <taxon>Mus</taxon>
    </lineage>
</organism>
<reference key="1">
    <citation type="journal article" date="1988" name="FEBS Lett.">
        <title>Isolation and analysis of the mouse opsin gene.</title>
        <authorList>
            <person name="Baehr W."/>
            <person name="Falk J.D."/>
            <person name="Bugra K."/>
            <person name="Triantafyllos J.T."/>
            <person name="McGinnis J.F."/>
        </authorList>
    </citation>
    <scope>NUCLEOTIDE SEQUENCE [GENOMIC DNA]</scope>
</reference>
<reference key="2">
    <citation type="journal article" date="1990" name="J. Biol. Chem.">
        <title>Mouse opsin. Gene structure and molecular basis of multiple transcripts.</title>
        <authorList>
            <person name="Al-Ubaidi M.R."/>
            <person name="Pittler S.J."/>
            <person name="Champagne M.S."/>
            <person name="Triantafyllos J.T."/>
            <person name="McGinnis J.F."/>
            <person name="Baehr W."/>
        </authorList>
    </citation>
    <scope>NUCLEOTIDE SEQUENCE [GENOMIC DNA]</scope>
</reference>
<reference key="3">
    <citation type="journal article" date="2005" name="Science">
        <title>The transcriptional landscape of the mammalian genome.</title>
        <authorList>
            <person name="Carninci P."/>
            <person name="Kasukawa T."/>
            <person name="Katayama S."/>
            <person name="Gough J."/>
            <person name="Frith M.C."/>
            <person name="Maeda N."/>
            <person name="Oyama R."/>
            <person name="Ravasi T."/>
            <person name="Lenhard B."/>
            <person name="Wells C."/>
            <person name="Kodzius R."/>
            <person name="Shimokawa K."/>
            <person name="Bajic V.B."/>
            <person name="Brenner S.E."/>
            <person name="Batalov S."/>
            <person name="Forrest A.R."/>
            <person name="Zavolan M."/>
            <person name="Davis M.J."/>
            <person name="Wilming L.G."/>
            <person name="Aidinis V."/>
            <person name="Allen J.E."/>
            <person name="Ambesi-Impiombato A."/>
            <person name="Apweiler R."/>
            <person name="Aturaliya R.N."/>
            <person name="Bailey T.L."/>
            <person name="Bansal M."/>
            <person name="Baxter L."/>
            <person name="Beisel K.W."/>
            <person name="Bersano T."/>
            <person name="Bono H."/>
            <person name="Chalk A.M."/>
            <person name="Chiu K.P."/>
            <person name="Choudhary V."/>
            <person name="Christoffels A."/>
            <person name="Clutterbuck D.R."/>
            <person name="Crowe M.L."/>
            <person name="Dalla E."/>
            <person name="Dalrymple B.P."/>
            <person name="de Bono B."/>
            <person name="Della Gatta G."/>
            <person name="di Bernardo D."/>
            <person name="Down T."/>
            <person name="Engstrom P."/>
            <person name="Fagiolini M."/>
            <person name="Faulkner G."/>
            <person name="Fletcher C.F."/>
            <person name="Fukushima T."/>
            <person name="Furuno M."/>
            <person name="Futaki S."/>
            <person name="Gariboldi M."/>
            <person name="Georgii-Hemming P."/>
            <person name="Gingeras T.R."/>
            <person name="Gojobori T."/>
            <person name="Green R.E."/>
            <person name="Gustincich S."/>
            <person name="Harbers M."/>
            <person name="Hayashi Y."/>
            <person name="Hensch T.K."/>
            <person name="Hirokawa N."/>
            <person name="Hill D."/>
            <person name="Huminiecki L."/>
            <person name="Iacono M."/>
            <person name="Ikeo K."/>
            <person name="Iwama A."/>
            <person name="Ishikawa T."/>
            <person name="Jakt M."/>
            <person name="Kanapin A."/>
            <person name="Katoh M."/>
            <person name="Kawasawa Y."/>
            <person name="Kelso J."/>
            <person name="Kitamura H."/>
            <person name="Kitano H."/>
            <person name="Kollias G."/>
            <person name="Krishnan S.P."/>
            <person name="Kruger A."/>
            <person name="Kummerfeld S.K."/>
            <person name="Kurochkin I.V."/>
            <person name="Lareau L.F."/>
            <person name="Lazarevic D."/>
            <person name="Lipovich L."/>
            <person name="Liu J."/>
            <person name="Liuni S."/>
            <person name="McWilliam S."/>
            <person name="Madan Babu M."/>
            <person name="Madera M."/>
            <person name="Marchionni L."/>
            <person name="Matsuda H."/>
            <person name="Matsuzawa S."/>
            <person name="Miki H."/>
            <person name="Mignone F."/>
            <person name="Miyake S."/>
            <person name="Morris K."/>
            <person name="Mottagui-Tabar S."/>
            <person name="Mulder N."/>
            <person name="Nakano N."/>
            <person name="Nakauchi H."/>
            <person name="Ng P."/>
            <person name="Nilsson R."/>
            <person name="Nishiguchi S."/>
            <person name="Nishikawa S."/>
            <person name="Nori F."/>
            <person name="Ohara O."/>
            <person name="Okazaki Y."/>
            <person name="Orlando V."/>
            <person name="Pang K.C."/>
            <person name="Pavan W.J."/>
            <person name="Pavesi G."/>
            <person name="Pesole G."/>
            <person name="Petrovsky N."/>
            <person name="Piazza S."/>
            <person name="Reed J."/>
            <person name="Reid J.F."/>
            <person name="Ring B.Z."/>
            <person name="Ringwald M."/>
            <person name="Rost B."/>
            <person name="Ruan Y."/>
            <person name="Salzberg S.L."/>
            <person name="Sandelin A."/>
            <person name="Schneider C."/>
            <person name="Schoenbach C."/>
            <person name="Sekiguchi K."/>
            <person name="Semple C.A."/>
            <person name="Seno S."/>
            <person name="Sessa L."/>
            <person name="Sheng Y."/>
            <person name="Shibata Y."/>
            <person name="Shimada H."/>
            <person name="Shimada K."/>
            <person name="Silva D."/>
            <person name="Sinclair B."/>
            <person name="Sperling S."/>
            <person name="Stupka E."/>
            <person name="Sugiura K."/>
            <person name="Sultana R."/>
            <person name="Takenaka Y."/>
            <person name="Taki K."/>
            <person name="Tammoja K."/>
            <person name="Tan S.L."/>
            <person name="Tang S."/>
            <person name="Taylor M.S."/>
            <person name="Tegner J."/>
            <person name="Teichmann S.A."/>
            <person name="Ueda H.R."/>
            <person name="van Nimwegen E."/>
            <person name="Verardo R."/>
            <person name="Wei C.L."/>
            <person name="Yagi K."/>
            <person name="Yamanishi H."/>
            <person name="Zabarovsky E."/>
            <person name="Zhu S."/>
            <person name="Zimmer A."/>
            <person name="Hide W."/>
            <person name="Bult C."/>
            <person name="Grimmond S.M."/>
            <person name="Teasdale R.D."/>
            <person name="Liu E.T."/>
            <person name="Brusic V."/>
            <person name="Quackenbush J."/>
            <person name="Wahlestedt C."/>
            <person name="Mattick J.S."/>
            <person name="Hume D.A."/>
            <person name="Kai C."/>
            <person name="Sasaki D."/>
            <person name="Tomaru Y."/>
            <person name="Fukuda S."/>
            <person name="Kanamori-Katayama M."/>
            <person name="Suzuki M."/>
            <person name="Aoki J."/>
            <person name="Arakawa T."/>
            <person name="Iida J."/>
            <person name="Imamura K."/>
            <person name="Itoh M."/>
            <person name="Kato T."/>
            <person name="Kawaji H."/>
            <person name="Kawagashira N."/>
            <person name="Kawashima T."/>
            <person name="Kojima M."/>
            <person name="Kondo S."/>
            <person name="Konno H."/>
            <person name="Nakano K."/>
            <person name="Ninomiya N."/>
            <person name="Nishio T."/>
            <person name="Okada M."/>
            <person name="Plessy C."/>
            <person name="Shibata K."/>
            <person name="Shiraki T."/>
            <person name="Suzuki S."/>
            <person name="Tagami M."/>
            <person name="Waki K."/>
            <person name="Watahiki A."/>
            <person name="Okamura-Oho Y."/>
            <person name="Suzuki H."/>
            <person name="Kawai J."/>
            <person name="Hayashizaki Y."/>
        </authorList>
    </citation>
    <scope>NUCLEOTIDE SEQUENCE [LARGE SCALE MRNA]</scope>
    <source>
        <strain>C57BL/6J</strain>
        <tissue>Retina</tissue>
    </source>
</reference>
<reference key="4">
    <citation type="submission" date="2005-07" db="EMBL/GenBank/DDBJ databases">
        <authorList>
            <person name="Mural R.J."/>
            <person name="Adams M.D."/>
            <person name="Myers E.W."/>
            <person name="Smith H.O."/>
            <person name="Venter J.C."/>
        </authorList>
    </citation>
    <scope>NUCLEOTIDE SEQUENCE [LARGE SCALE GENOMIC DNA]</scope>
</reference>
<reference key="5">
    <citation type="journal article" date="2004" name="Genome Res.">
        <title>The status, quality, and expansion of the NIH full-length cDNA project: the Mammalian Gene Collection (MGC).</title>
        <authorList>
            <consortium name="The MGC Project Team"/>
        </authorList>
    </citation>
    <scope>NUCLEOTIDE SEQUENCE [LARGE SCALE MRNA]</scope>
    <source>
        <tissue>Eye</tissue>
    </source>
</reference>
<reference key="6">
    <citation type="journal article" date="1997" name="Nat. Genet.">
        <title>Retinopathy induced in mice by targeted disruption of the rhodopsin gene.</title>
        <authorList>
            <person name="Humphries M.M."/>
            <person name="Rancourt D."/>
            <person name="Farrar G.J."/>
            <person name="Kenna P."/>
            <person name="Hazel M."/>
            <person name="Bush R.A."/>
            <person name="Sieving P.A."/>
            <person name="Sheils D.M."/>
            <person name="McNally N."/>
            <person name="Creighton P."/>
            <person name="Erven A."/>
            <person name="Boros A."/>
            <person name="Gulya K."/>
            <person name="Capecchi M.R."/>
            <person name="Humphries P."/>
        </authorList>
    </citation>
    <scope>FUNCTION</scope>
    <scope>DISRUPTION PHENOTYPE</scope>
</reference>
<reference key="7">
    <citation type="journal article" date="2002" name="Protein Sci.">
        <title>Mass spectrometric analysis of the kinetics of in vivo rhodopsin phosphorylation.</title>
        <authorList>
            <person name="Lee K.A."/>
            <person name="Craven K.B."/>
            <person name="Niemi G.A."/>
            <person name="Hurley J.B."/>
        </authorList>
    </citation>
    <scope>PHOSPHORYLATION AT SER-334; SER-338 AND SER-343</scope>
    <scope>IDENTIFICATION BY MASS SPECTROMETRY</scope>
</reference>
<reference key="8">
    <citation type="journal article" date="2005" name="J. Biol. Chem.">
        <title>Recoverin undergoes light-dependent intracellular translocation in rod photoreceptors.</title>
        <authorList>
            <person name="Strissel K.J."/>
            <person name="Lishko P.V."/>
            <person name="Trieu L.H."/>
            <person name="Kennedy M.J."/>
            <person name="Hurley J.B."/>
            <person name="Arshavsky V.Y."/>
        </authorList>
    </citation>
    <scope>SUBCELLULAR LOCATION</scope>
    <scope>TISSUE SPECIFICITY</scope>
</reference>
<reference key="9">
    <citation type="journal article" date="2016" name="Biochemistry">
        <title>Progressive Rod-Cone Degeneration (PRCD) Protein Requires N-Terminal S-Acylation and Rhodopsin Binding for Photoreceptor Outer Segment Localization and Maintaining Intracellular Stability.</title>
        <authorList>
            <person name="Spencer W.J."/>
            <person name="Pearring J.N."/>
            <person name="Salinas R.Y."/>
            <person name="Loiselle D.R."/>
            <person name="Skiba N.P."/>
            <person name="Arshavsky V.Y."/>
        </authorList>
    </citation>
    <scope>INTERACTION WITH PRCD</scope>
</reference>
<reference key="10">
    <citation type="journal article" date="2016" name="J. Gen. Physiol.">
        <title>Rhodopsin kinase and arrestin binding control the decay of photoactivated rhodopsin and dark adaptation of mouse rods.</title>
        <authorList>
            <person name="Frederiksen R."/>
            <person name="Nymark S."/>
            <person name="Kolesnikov A.V."/>
            <person name="Berry J.D."/>
            <person name="Adler L. IV"/>
            <person name="Koutalos Y."/>
            <person name="Kefalov V.J."/>
            <person name="Cornwall M.C."/>
        </authorList>
    </citation>
    <scope>FUNCTION</scope>
    <scope>SUBCELLULAR LOCATION</scope>
    <scope>TISSUE SPECIFICITY</scope>
</reference>
<reference key="11">
    <citation type="journal article" date="2017" name="J. Histochem. Cytochem.">
        <title>Immunocytochemical Profiling of Cultured Mouse Primary Retinal Cells.</title>
        <authorList>
            <person name="Zalis M.C."/>
            <person name="Johansson S."/>
            <person name="Englund-Johansson U."/>
        </authorList>
    </citation>
    <scope>SUBCELLULAR LOCATION</scope>
    <scope>DEVELOPMENTAL STAGE</scope>
</reference>
<reference key="12">
    <citation type="journal article" date="2020" name="Life. Sci Alliance">
        <title>SARM1 deficiency promotes rod and cone photoreceptor cell survival in a model of retinal degeneration.</title>
        <authorList>
            <person name="Ozaki E."/>
            <person name="Gibbons L."/>
            <person name="Neto N.G."/>
            <person name="Kenna P."/>
            <person name="Carty M."/>
            <person name="Humphries M."/>
            <person name="Humphries P."/>
            <person name="Campbell M."/>
            <person name="Monaghan M."/>
            <person name="Bowie A."/>
            <person name="Doyle S.L."/>
        </authorList>
    </citation>
    <scope>DISRUPTION PHENOTYPE</scope>
</reference>